<feature type="signal peptide" evidence="2">
    <location>
        <begin position="1"/>
        <end position="18"/>
    </location>
</feature>
<feature type="chain" id="PRO_0000031591" description="Serum amyloid A-3 protein" evidence="2">
    <location>
        <begin position="19"/>
        <end position="122"/>
    </location>
</feature>
<feature type="region of interest" description="Disordered" evidence="3">
    <location>
        <begin position="87"/>
        <end position="122"/>
    </location>
</feature>
<feature type="sequence conflict" description="In Ref. 5; AAA40088." evidence="4" ref="5">
    <original>R</original>
    <variation>G</variation>
    <location>
        <position position="57"/>
    </location>
</feature>
<feature type="helix" evidence="5">
    <location>
        <begin position="21"/>
        <end position="45"/>
    </location>
</feature>
<feature type="helix" evidence="5">
    <location>
        <begin position="51"/>
        <end position="63"/>
    </location>
</feature>
<feature type="helix" evidence="5">
    <location>
        <begin position="67"/>
        <end position="87"/>
    </location>
</feature>
<feature type="helix" evidence="5">
    <location>
        <begin position="94"/>
        <end position="105"/>
    </location>
</feature>
<feature type="helix" evidence="5">
    <location>
        <begin position="110"/>
        <end position="113"/>
    </location>
</feature>
<reference key="1">
    <citation type="journal article" date="1986" name="Nucleic Acids Res.">
        <title>The sequence and structure of a new serum amyloid A gene.</title>
        <authorList>
            <person name="Stearman R.S."/>
            <person name="Lowell C.A."/>
            <person name="Peltzman C.G."/>
            <person name="Morrow J.F."/>
        </authorList>
    </citation>
    <scope>NUCLEOTIDE SEQUENCE [GENOMIC DNA / MRNA]</scope>
</reference>
<reference key="2">
    <citation type="journal article" date="1986" name="J. Biol. Chem.">
        <title>Structure of the murine serum amyloid A gene family. Gene conversion.</title>
        <authorList>
            <person name="Lowell C.A."/>
            <person name="Potter D.A."/>
            <person name="Stearman R.S."/>
            <person name="Morrow J.F."/>
        </authorList>
    </citation>
    <scope>NUCLEOTIDE SEQUENCE [GENOMIC DNA]</scope>
    <source>
        <strain>SWR/J</strain>
    </source>
</reference>
<reference key="3">
    <citation type="journal article" date="2004" name="Genome Res.">
        <title>The status, quality, and expansion of the NIH full-length cDNA project: the Mammalian Gene Collection (MGC).</title>
        <authorList>
            <consortium name="The MGC Project Team"/>
        </authorList>
    </citation>
    <scope>NUCLEOTIDE SEQUENCE [LARGE SCALE MRNA]</scope>
    <source>
        <strain>Czech II</strain>
        <tissue>Mammary gland</tissue>
    </source>
</reference>
<reference key="4">
    <citation type="journal article" date="1982" name="Ann. N. Y. Acad. Sci.">
        <title>Regulation of synthesis of amyloid A-related protein.</title>
        <authorList>
            <person name="Stearman R.S."/>
            <person name="Lowell C.A."/>
            <person name="Pearson W.R."/>
            <person name="Morrow J.F."/>
        </authorList>
    </citation>
    <scope>NUCLEOTIDE SEQUENCE [MRNA] OF 27-64</scope>
    <source>
        <strain>BALB/cJ</strain>
        <tissue>Liver</tissue>
    </source>
</reference>
<reference key="5">
    <citation type="journal article" date="1987" name="J. Immunol.">
        <title>Structural diversity of murine serum amyloid A genes. Evolutionary implications.</title>
        <authorList>
            <person name="Yamamoto K."/>
            <person name="Goto N."/>
            <person name="Kosaka J."/>
            <person name="Shiroo M."/>
            <person name="Yeul Y.D."/>
            <person name="Migita S."/>
        </authorList>
    </citation>
    <scope>NUCLEOTIDE SEQUENCE [GENOMIC DNA] OF 32-122</scope>
</reference>
<dbReference type="EMBL" id="X03479">
    <property type="protein sequence ID" value="CAA27199.1"/>
    <property type="molecule type" value="mRNA"/>
</dbReference>
<dbReference type="EMBL" id="X03505">
    <property type="protein sequence ID" value="CAA27219.1"/>
    <property type="molecule type" value="Genomic_DNA"/>
</dbReference>
<dbReference type="EMBL" id="X03506">
    <property type="protein sequence ID" value="CAA27219.1"/>
    <property type="status" value="JOINED"/>
    <property type="molecule type" value="Genomic_DNA"/>
</dbReference>
<dbReference type="EMBL" id="X03507">
    <property type="protein sequence ID" value="CAA27219.1"/>
    <property type="status" value="JOINED"/>
    <property type="molecule type" value="Genomic_DNA"/>
</dbReference>
<dbReference type="EMBL" id="BC055885">
    <property type="protein sequence ID" value="AAH55885.1"/>
    <property type="molecule type" value="mRNA"/>
</dbReference>
<dbReference type="EMBL" id="M25467">
    <property type="protein sequence ID" value="AAA37231.1"/>
    <property type="molecule type" value="mRNA"/>
</dbReference>
<dbReference type="EMBL" id="M17792">
    <property type="protein sequence ID" value="AAA40088.1"/>
    <property type="molecule type" value="Genomic_DNA"/>
</dbReference>
<dbReference type="CCDS" id="CCDS21282.1"/>
<dbReference type="PIR" id="A23521">
    <property type="entry name" value="A23521"/>
</dbReference>
<dbReference type="PIR" id="I71950">
    <property type="entry name" value="I71950"/>
</dbReference>
<dbReference type="RefSeq" id="NP_035445.1">
    <property type="nucleotide sequence ID" value="NM_011315.3"/>
</dbReference>
<dbReference type="PDB" id="4Q5G">
    <property type="method" value="X-ray"/>
    <property type="resolution" value="2.06 A"/>
    <property type="chains" value="A/B=19-122"/>
</dbReference>
<dbReference type="PDB" id="6PXZ">
    <property type="method" value="X-ray"/>
    <property type="resolution" value="1.70 A"/>
    <property type="chains" value="A/B/C=19-122"/>
</dbReference>
<dbReference type="PDB" id="6PY0">
    <property type="method" value="X-ray"/>
    <property type="resolution" value="2.20 A"/>
    <property type="chains" value="A/B/C=19-122"/>
</dbReference>
<dbReference type="PDBsum" id="4Q5G"/>
<dbReference type="PDBsum" id="6PXZ"/>
<dbReference type="PDBsum" id="6PY0"/>
<dbReference type="SMR" id="P04918"/>
<dbReference type="FunCoup" id="P04918">
    <property type="interactions" value="410"/>
</dbReference>
<dbReference type="IntAct" id="P04918">
    <property type="interactions" value="1"/>
</dbReference>
<dbReference type="MINT" id="P04918"/>
<dbReference type="STRING" id="10090.ENSMUSP00000006956"/>
<dbReference type="iPTMnet" id="P04918"/>
<dbReference type="PhosphoSitePlus" id="P04918"/>
<dbReference type="PaxDb" id="10090-ENSMUSP00000006956"/>
<dbReference type="ProteomicsDB" id="256580"/>
<dbReference type="Pumba" id="P04918"/>
<dbReference type="DNASU" id="20210"/>
<dbReference type="Ensembl" id="ENSMUST00000006956.9">
    <property type="protein sequence ID" value="ENSMUSP00000006956.8"/>
    <property type="gene ID" value="ENSMUSG00000040026.9"/>
</dbReference>
<dbReference type="GeneID" id="20210"/>
<dbReference type="KEGG" id="mmu:20210"/>
<dbReference type="UCSC" id="uc009gyw.1">
    <property type="organism name" value="mouse"/>
</dbReference>
<dbReference type="AGR" id="MGI:98223"/>
<dbReference type="CTD" id="20210"/>
<dbReference type="MGI" id="MGI:98223">
    <property type="gene designation" value="Saa3"/>
</dbReference>
<dbReference type="VEuPathDB" id="HostDB:ENSMUSG00000040026"/>
<dbReference type="eggNOG" id="ENOG502S4PB">
    <property type="taxonomic scope" value="Eukaryota"/>
</dbReference>
<dbReference type="GeneTree" id="ENSGT00390000004737"/>
<dbReference type="HOGENOM" id="CLU_129936_0_0_1"/>
<dbReference type="InParanoid" id="P04918"/>
<dbReference type="OMA" id="KGAGDMW"/>
<dbReference type="OrthoDB" id="6112826at2759"/>
<dbReference type="PhylomeDB" id="P04918"/>
<dbReference type="TreeFam" id="TF332544"/>
<dbReference type="BioGRID-ORCS" id="20210">
    <property type="hits" value="1 hit in 77 CRISPR screens"/>
</dbReference>
<dbReference type="ChiTaRS" id="Saa3">
    <property type="organism name" value="mouse"/>
</dbReference>
<dbReference type="EvolutionaryTrace" id="P04918"/>
<dbReference type="PRO" id="PR:P04918"/>
<dbReference type="Proteomes" id="UP000000589">
    <property type="component" value="Chromosome 7"/>
</dbReference>
<dbReference type="RNAct" id="P04918">
    <property type="molecule type" value="protein"/>
</dbReference>
<dbReference type="Bgee" id="ENSMUSG00000040026">
    <property type="expression patterns" value="Expressed in ankle joint and 92 other cell types or tissues"/>
</dbReference>
<dbReference type="ExpressionAtlas" id="P04918">
    <property type="expression patterns" value="baseline and differential"/>
</dbReference>
<dbReference type="GO" id="GO:0005615">
    <property type="term" value="C:extracellular space"/>
    <property type="evidence" value="ECO:0000314"/>
    <property type="project" value="MGI"/>
</dbReference>
<dbReference type="GO" id="GO:0034364">
    <property type="term" value="C:high-density lipoprotein particle"/>
    <property type="evidence" value="ECO:0007669"/>
    <property type="project" value="UniProtKB-KW"/>
</dbReference>
<dbReference type="GO" id="GO:0042056">
    <property type="term" value="F:chemoattractant activity"/>
    <property type="evidence" value="ECO:0000314"/>
    <property type="project" value="MGI"/>
</dbReference>
<dbReference type="GO" id="GO:0035662">
    <property type="term" value="F:Toll-like receptor 4 binding"/>
    <property type="evidence" value="ECO:0000353"/>
    <property type="project" value="MGI"/>
</dbReference>
<dbReference type="GO" id="GO:0006953">
    <property type="term" value="P:acute-phase response"/>
    <property type="evidence" value="ECO:0007669"/>
    <property type="project" value="UniProtKB-KW"/>
</dbReference>
<dbReference type="GO" id="GO:0060326">
    <property type="term" value="P:cell chemotaxis"/>
    <property type="evidence" value="ECO:0000314"/>
    <property type="project" value="MGI"/>
</dbReference>
<dbReference type="GO" id="GO:0071347">
    <property type="term" value="P:cellular response to interleukin-1"/>
    <property type="evidence" value="ECO:0000314"/>
    <property type="project" value="MGI"/>
</dbReference>
<dbReference type="GO" id="GO:0009617">
    <property type="term" value="P:response to bacterium"/>
    <property type="evidence" value="ECO:0000270"/>
    <property type="project" value="MGI"/>
</dbReference>
<dbReference type="GO" id="GO:0035634">
    <property type="term" value="P:response to stilbenoid"/>
    <property type="evidence" value="ECO:0000270"/>
    <property type="project" value="UniProtKB"/>
</dbReference>
<dbReference type="FunFam" id="1.10.132.110:FF:000001">
    <property type="entry name" value="Serum amyloid A protein"/>
    <property type="match status" value="1"/>
</dbReference>
<dbReference type="Gene3D" id="1.10.132.110">
    <property type="entry name" value="Serum amyloid A protein"/>
    <property type="match status" value="1"/>
</dbReference>
<dbReference type="InterPro" id="IPR000096">
    <property type="entry name" value="Serum_amyloid_A"/>
</dbReference>
<dbReference type="InterPro" id="IPR052464">
    <property type="entry name" value="Synovial_Prolif_Regulator"/>
</dbReference>
<dbReference type="PANTHER" id="PTHR23424">
    <property type="entry name" value="SERUM AMYLOID A"/>
    <property type="match status" value="1"/>
</dbReference>
<dbReference type="PANTHER" id="PTHR23424:SF29">
    <property type="entry name" value="SERUM AMYLOID A PROTEIN"/>
    <property type="match status" value="1"/>
</dbReference>
<dbReference type="Pfam" id="PF00277">
    <property type="entry name" value="SAA"/>
    <property type="match status" value="1"/>
</dbReference>
<dbReference type="PIRSF" id="PIRSF002472">
    <property type="entry name" value="Serum_amyloid_A"/>
    <property type="match status" value="1"/>
</dbReference>
<dbReference type="PRINTS" id="PR00306">
    <property type="entry name" value="SERUMAMYLOID"/>
</dbReference>
<dbReference type="SMART" id="SM00197">
    <property type="entry name" value="SAA"/>
    <property type="match status" value="1"/>
</dbReference>
<dbReference type="PROSITE" id="PS00992">
    <property type="entry name" value="SAA"/>
    <property type="match status" value="1"/>
</dbReference>
<protein>
    <recommendedName>
        <fullName>Serum amyloid A-3 protein</fullName>
    </recommendedName>
</protein>
<organism>
    <name type="scientific">Mus musculus</name>
    <name type="common">Mouse</name>
    <dbReference type="NCBI Taxonomy" id="10090"/>
    <lineage>
        <taxon>Eukaryota</taxon>
        <taxon>Metazoa</taxon>
        <taxon>Chordata</taxon>
        <taxon>Craniata</taxon>
        <taxon>Vertebrata</taxon>
        <taxon>Euteleostomi</taxon>
        <taxon>Mammalia</taxon>
        <taxon>Eutheria</taxon>
        <taxon>Euarchontoglires</taxon>
        <taxon>Glires</taxon>
        <taxon>Rodentia</taxon>
        <taxon>Myomorpha</taxon>
        <taxon>Muroidea</taxon>
        <taxon>Muridae</taxon>
        <taxon>Murinae</taxon>
        <taxon>Mus</taxon>
        <taxon>Mus</taxon>
    </lineage>
</organism>
<proteinExistence type="evidence at protein level"/>
<name>SAA3_MOUSE</name>
<evidence type="ECO:0000250" key="1">
    <source>
        <dbReference type="UniProtKB" id="Q8SQ28"/>
    </source>
</evidence>
<evidence type="ECO:0000255" key="2"/>
<evidence type="ECO:0000256" key="3">
    <source>
        <dbReference type="SAM" id="MobiDB-lite"/>
    </source>
</evidence>
<evidence type="ECO:0000305" key="4"/>
<evidence type="ECO:0007829" key="5">
    <source>
        <dbReference type="PDB" id="6PXZ"/>
    </source>
</evidence>
<sequence length="122" mass="13774">MKPSIAIILCILILGVDSQRWVQFMKEAGQGSRDMWRAYSDMKKANWKNSDKYFHARGNYDAARRGPGGAWAAKVISDAREAVQKFTGHGAEDSRADQFANEWGRSGKDPNHFRPAGLPKRY</sequence>
<gene>
    <name type="primary">Saa3</name>
</gene>
<keyword id="KW-0002">3D-structure</keyword>
<keyword id="KW-0011">Acute phase</keyword>
<keyword id="KW-0345">HDL</keyword>
<keyword id="KW-1185">Reference proteome</keyword>
<keyword id="KW-0964">Secreted</keyword>
<keyword id="KW-0732">Signal</keyword>
<comment type="function">
    <text evidence="1">Major acute phase reactant. Apolipoprotein of the HDL complex. In vitro exhibits antimicrobial activity against Escherichia coli, Streptococcus uberis and Pseudomonas aeruginosa (By similarity).</text>
</comment>
<comment type="subcellular location">
    <subcellularLocation>
        <location evidence="1">Secreted</location>
    </subcellularLocation>
</comment>
<comment type="tissue specificity">
    <text>Found in various tissues.</text>
</comment>
<comment type="induction">
    <text>Upon cytokine stimulation.</text>
</comment>
<comment type="similarity">
    <text evidence="4">Belongs to the SAA family.</text>
</comment>
<accession>P04918</accession>
<accession>Q62201</accession>